<name>SELU_SALTY</name>
<reference key="1">
    <citation type="journal article" date="2001" name="Nature">
        <title>Complete genome sequence of Salmonella enterica serovar Typhimurium LT2.</title>
        <authorList>
            <person name="McClelland M."/>
            <person name="Sanderson K.E."/>
            <person name="Spieth J."/>
            <person name="Clifton S.W."/>
            <person name="Latreille P."/>
            <person name="Courtney L."/>
            <person name="Porwollik S."/>
            <person name="Ali J."/>
            <person name="Dante M."/>
            <person name="Du F."/>
            <person name="Hou S."/>
            <person name="Layman D."/>
            <person name="Leonard S."/>
            <person name="Nguyen C."/>
            <person name="Scott K."/>
            <person name="Holmes A."/>
            <person name="Grewal N."/>
            <person name="Mulvaney E."/>
            <person name="Ryan E."/>
            <person name="Sun H."/>
            <person name="Florea L."/>
            <person name="Miller W."/>
            <person name="Stoneking T."/>
            <person name="Nhan M."/>
            <person name="Waterston R."/>
            <person name="Wilson R.K."/>
        </authorList>
    </citation>
    <scope>NUCLEOTIDE SEQUENCE [LARGE SCALE GENOMIC DNA]</scope>
    <source>
        <strain>LT2 / SGSC1412 / ATCC 700720</strain>
    </source>
</reference>
<reference key="2">
    <citation type="journal article" date="1994" name="Proc. Natl. Acad. Sci. U.S.A.">
        <title>A purified selenophosphate-dependent enzyme from Salmonella typhimurium catalyzes the replacement of sulfur in 2-thiouridine residues in tRNAs with selenium.</title>
        <authorList>
            <person name="Veres Z."/>
            <person name="Stadtman T.C."/>
        </authorList>
    </citation>
    <scope>FUNCTION</scope>
    <scope>BIOPHYSICOCHEMICAL PROPERTIES</scope>
</reference>
<reference key="3">
    <citation type="journal article" date="2016" name="PLoS ONE">
        <title>Transfer RNA bound to MnmH protein is enriched with geranylated tRNA--a possible intermediate in its selenation?</title>
        <authorList>
            <person name="Jaeger G."/>
            <person name="Chen P."/>
            <person name="Bjoerk G.R."/>
        </authorList>
    </citation>
    <scope>FUNCTION</scope>
    <scope>CATALYTIC ACTIVITY</scope>
    <scope>PROPOSED REACTION MECHANISM</scope>
    <scope>DOMAIN</scope>
    <scope>MUTAGENESIS OF ALA-63; LEU-66; GLY-67; ARG-79; ALA-82; CYS-97; ARG-129 AND LYS-155</scope>
    <source>
        <strain>LT2</strain>
    </source>
</reference>
<accession>Q8ZR88</accession>
<protein>
    <recommendedName>
        <fullName evidence="1 6">tRNA 2-selenouridine synthase</fullName>
        <ecNumber evidence="1 8">2.9.1.3</ecNumber>
    </recommendedName>
    <alternativeName>
        <fullName>Selenophosphate-dependent tRNA 2-selenouridine synthase</fullName>
    </alternativeName>
</protein>
<comment type="function">
    <text evidence="3 4 8">Involved in the post-transcriptional modification of the uridine at the wobble position (U34) of tRNA(Lys), tRNA(Glu) and tRNA(Gln) (PubMed:27073879, PubMed:7520175). Catalyzes the conversion of 2-thiouridine (S2U-RNA) to 2-selenouridine (Se2U-RNA) (PubMed:27073879, PubMed:7520175). Acts in a two-step process involving geranylation of 2-thiouridine (S2U) to S-geranyl-2-thiouridine (geS2U) and subsequent selenation of the latter derivative to 2-selenouridine (Se2U) in the tRNA chain (Probable).</text>
</comment>
<comment type="catalytic activity">
    <reaction evidence="1 8">
        <text>5-methylaminomethyl-2-thiouridine(34) in tRNA + selenophosphate + (2E)-geranyl diphosphate + H2O + H(+) = 5-methylaminomethyl-2-selenouridine(34) in tRNA + (2E)-thiogeraniol + phosphate + diphosphate</text>
        <dbReference type="Rhea" id="RHEA:42716"/>
        <dbReference type="Rhea" id="RHEA-COMP:10195"/>
        <dbReference type="Rhea" id="RHEA-COMP:10196"/>
        <dbReference type="ChEBI" id="CHEBI:15377"/>
        <dbReference type="ChEBI" id="CHEBI:15378"/>
        <dbReference type="ChEBI" id="CHEBI:16144"/>
        <dbReference type="ChEBI" id="CHEBI:33019"/>
        <dbReference type="ChEBI" id="CHEBI:43474"/>
        <dbReference type="ChEBI" id="CHEBI:58057"/>
        <dbReference type="ChEBI" id="CHEBI:74455"/>
        <dbReference type="ChEBI" id="CHEBI:82743"/>
        <dbReference type="ChEBI" id="CHEBI:143703"/>
        <dbReference type="EC" id="2.9.1.3"/>
    </reaction>
    <physiologicalReaction direction="left-to-right" evidence="1">
        <dbReference type="Rhea" id="RHEA:42717"/>
    </physiologicalReaction>
</comment>
<comment type="catalytic activity">
    <reaction evidence="1">
        <text>5-methylaminomethyl-2-thiouridine(34) in tRNA + (2E)-geranyl diphosphate = 5-methylaminomethyl-S-(2E)-geranyl-thiouridine(34) in tRNA + diphosphate</text>
        <dbReference type="Rhea" id="RHEA:14085"/>
        <dbReference type="Rhea" id="RHEA-COMP:10195"/>
        <dbReference type="Rhea" id="RHEA-COMP:14654"/>
        <dbReference type="ChEBI" id="CHEBI:33019"/>
        <dbReference type="ChEBI" id="CHEBI:58057"/>
        <dbReference type="ChEBI" id="CHEBI:74455"/>
        <dbReference type="ChEBI" id="CHEBI:140632"/>
    </reaction>
    <physiologicalReaction direction="left-to-right" evidence="1">
        <dbReference type="Rhea" id="RHEA:14086"/>
    </physiologicalReaction>
</comment>
<comment type="catalytic activity">
    <reaction evidence="1">
        <text>5-methylaminomethyl-S-(2E)-geranyl-thiouridine(34) in tRNA + selenophosphate + H(+) = 5-methylaminomethyl-2-(Se-phospho)selenouridine(34) in tRNA + (2E)-thiogeraniol</text>
        <dbReference type="Rhea" id="RHEA:60172"/>
        <dbReference type="Rhea" id="RHEA-COMP:14654"/>
        <dbReference type="Rhea" id="RHEA-COMP:15523"/>
        <dbReference type="ChEBI" id="CHEBI:15378"/>
        <dbReference type="ChEBI" id="CHEBI:16144"/>
        <dbReference type="ChEBI" id="CHEBI:140632"/>
        <dbReference type="ChEBI" id="CHEBI:143702"/>
        <dbReference type="ChEBI" id="CHEBI:143703"/>
    </reaction>
    <physiologicalReaction direction="left-to-right" evidence="1">
        <dbReference type="Rhea" id="RHEA:60173"/>
    </physiologicalReaction>
</comment>
<comment type="catalytic activity">
    <reaction evidence="1">
        <text>5-methylaminomethyl-2-(Se-phospho)selenouridine(34) in tRNA + H2O = 5-methylaminomethyl-2-selenouridine(34) in tRNA + phosphate</text>
        <dbReference type="Rhea" id="RHEA:60176"/>
        <dbReference type="Rhea" id="RHEA-COMP:10196"/>
        <dbReference type="Rhea" id="RHEA-COMP:15523"/>
        <dbReference type="ChEBI" id="CHEBI:15377"/>
        <dbReference type="ChEBI" id="CHEBI:43474"/>
        <dbReference type="ChEBI" id="CHEBI:82743"/>
        <dbReference type="ChEBI" id="CHEBI:143702"/>
    </reaction>
    <physiologicalReaction direction="left-to-right" evidence="1">
        <dbReference type="Rhea" id="RHEA:60177"/>
    </physiologicalReaction>
</comment>
<comment type="biophysicochemical properties">
    <kinetics>
        <KM evidence="4">17.1 uM for selenophosphate</KM>
    </kinetics>
</comment>
<comment type="subunit">
    <text evidence="1">Monomer.</text>
</comment>
<comment type="domain">
    <text evidence="3">Composed of a rhodanese domain and a P-loop domain, which probably binds geranyl diphosphate. The two activities are mechanistically different, but the rhodanese domain is important for both.</text>
</comment>
<comment type="miscellaneous">
    <text evidence="8">It was also suggested that 2-thiourine geranylation and 2-thiouridine selenation in the tRNA chain may occur independently, in two distinc metabolic processes.</text>
</comment>
<comment type="similarity">
    <text evidence="1 7">Belongs to the SelU family.</text>
</comment>
<organism>
    <name type="scientific">Salmonella typhimurium (strain LT2 / SGSC1412 / ATCC 700720)</name>
    <dbReference type="NCBI Taxonomy" id="99287"/>
    <lineage>
        <taxon>Bacteria</taxon>
        <taxon>Pseudomonadati</taxon>
        <taxon>Pseudomonadota</taxon>
        <taxon>Gammaproteobacteria</taxon>
        <taxon>Enterobacterales</taxon>
        <taxon>Enterobacteriaceae</taxon>
        <taxon>Salmonella</taxon>
    </lineage>
</organism>
<gene>
    <name evidence="1" type="primary">selU</name>
    <name evidence="5" type="synonym">mnmH</name>
    <name type="ordered locus">STM0513</name>
</gene>
<evidence type="ECO:0000255" key="1">
    <source>
        <dbReference type="HAMAP-Rule" id="MF_01622"/>
    </source>
</evidence>
<evidence type="ECO:0000255" key="2">
    <source>
        <dbReference type="PROSITE-ProRule" id="PRU00173"/>
    </source>
</evidence>
<evidence type="ECO:0000269" key="3">
    <source>
    </source>
</evidence>
<evidence type="ECO:0000269" key="4">
    <source>
    </source>
</evidence>
<evidence type="ECO:0000303" key="5">
    <source>
    </source>
</evidence>
<evidence type="ECO:0000303" key="6">
    <source>
    </source>
</evidence>
<evidence type="ECO:0000305" key="7"/>
<evidence type="ECO:0000305" key="8">
    <source>
    </source>
</evidence>
<feature type="chain" id="PRO_0000210875" description="tRNA 2-selenouridine synthase">
    <location>
        <begin position="1"/>
        <end position="364"/>
    </location>
</feature>
<feature type="domain" description="Rhodanese" evidence="1 2">
    <location>
        <begin position="14"/>
        <end position="137"/>
    </location>
</feature>
<feature type="active site" description="S-selanylcysteine intermediate" evidence="1 2">
    <location>
        <position position="97"/>
    </location>
</feature>
<feature type="binding site" evidence="8">
    <location>
        <position position="149"/>
    </location>
    <ligand>
        <name>(2E)-geranyl diphosphate</name>
        <dbReference type="ChEBI" id="CHEBI:58057"/>
    </ligand>
</feature>
<feature type="mutagenesis site" description="Increases geranylation activity." evidence="3">
    <original>A</original>
    <variation>P</variation>
    <location>
        <position position="63"/>
    </location>
</feature>
<feature type="mutagenesis site" description="Increases geranylation activity." evidence="3">
    <original>L</original>
    <variation>P</variation>
    <location>
        <position position="66"/>
    </location>
</feature>
<feature type="mutagenesis site" description="Increases geranylation activity." evidence="3">
    <original>G</original>
    <variation>C</variation>
    <variation>H</variation>
    <variation>I</variation>
    <variation>L</variation>
    <variation>M</variation>
    <variation>N</variation>
    <variation>R</variation>
    <variation>T</variation>
    <variation>V</variation>
    <location>
        <position position="67"/>
    </location>
</feature>
<feature type="mutagenesis site" description="Increases geranylation activity. Lack of geranylation activity; when associated with A-155." evidence="3">
    <original>G</original>
    <variation>E</variation>
    <location>
        <position position="67"/>
    </location>
</feature>
<feature type="mutagenesis site" description="Increases geranylation activity." evidence="3">
    <original>R</original>
    <variation>W</variation>
    <location>
        <position position="79"/>
    </location>
</feature>
<feature type="mutagenesis site" description="Increases geranylation activity." evidence="3">
    <original>A</original>
    <variation>T</variation>
    <location>
        <position position="82"/>
    </location>
</feature>
<feature type="mutagenesis site" description="Reduces the level of geranylation but does not abolish it." evidence="3">
    <original>C</original>
    <variation>A</variation>
    <location>
        <position position="97"/>
    </location>
</feature>
<feature type="mutagenesis site" description="Reduces the level of geranylation but does not abolish it." evidence="3">
    <original>C</original>
    <variation>S</variation>
    <location>
        <position position="97"/>
    </location>
</feature>
<feature type="mutagenesis site" description="Increases geranylation activity." evidence="3">
    <original>R</original>
    <variation>C</variation>
    <location>
        <position position="129"/>
    </location>
</feature>
<feature type="mutagenesis site" description="Lack of geranylation activity." evidence="3">
    <original>K</original>
    <variation>A</variation>
    <location>
        <position position="155"/>
    </location>
</feature>
<sequence length="364" mass="41328">MQDRQKAQDYRALLLADTPLIDVRAPIEFEQGAMPGAINLPLMMDDERAAVGTCYKRQGADAALALGHRLVCGDIRQQRLEAWKAAYQRFPNGYLCCARGGQRSHIVQRWLQETGIDCPLIEGGYKALRQTAIQATWQLAQKPILLIGGCTGSGKTQLVRQQPNGVDLEGLARHRGSSFGRTLNPQLSQASFENKLAVELLKINARQTLKRWVLEDEGRTIGANHLPECLRERMAQAPIAVVEDPFALRLERLREEYFIRMHHDFTHAYGDEAGWQAYSEYLHHGLFAIRRRLGLQRFAELTDTLDRALAEQLSSGSTDGHMAWLVPLLNEYYDPMYRYQLEKKAANIVFRGTWQDVANWLKAQ</sequence>
<keyword id="KW-1185">Reference proteome</keyword>
<keyword id="KW-0711">Selenium</keyword>
<keyword id="KW-0808">Transferase</keyword>
<proteinExistence type="evidence at protein level"/>
<dbReference type="EC" id="2.9.1.3" evidence="1 8"/>
<dbReference type="EMBL" id="AE006468">
    <property type="protein sequence ID" value="AAL19467.1"/>
    <property type="molecule type" value="Genomic_DNA"/>
</dbReference>
<dbReference type="RefSeq" id="WP_001154078.1">
    <property type="nucleotide sequence ID" value="NC_003197.2"/>
</dbReference>
<dbReference type="SMR" id="Q8ZR88"/>
<dbReference type="STRING" id="99287.STM0513"/>
<dbReference type="PaxDb" id="99287-STM0513"/>
<dbReference type="KEGG" id="stm:STM0513"/>
<dbReference type="PATRIC" id="fig|99287.12.peg.547"/>
<dbReference type="HOGENOM" id="CLU_043456_1_0_6"/>
<dbReference type="OMA" id="RPLVYCW"/>
<dbReference type="PhylomeDB" id="Q8ZR88"/>
<dbReference type="BioCyc" id="SENT99287:STM0513-MONOMER"/>
<dbReference type="BRENDA" id="2.9.1.3">
    <property type="organism ID" value="5542"/>
</dbReference>
<dbReference type="Proteomes" id="UP000001014">
    <property type="component" value="Chromosome"/>
</dbReference>
<dbReference type="GO" id="GO:0016765">
    <property type="term" value="F:transferase activity, transferring alkyl or aryl (other than methyl) groups"/>
    <property type="evidence" value="ECO:0007669"/>
    <property type="project" value="UniProtKB-UniRule"/>
</dbReference>
<dbReference type="GO" id="GO:0043828">
    <property type="term" value="F:tRNA 2-selenouridine synthase activity"/>
    <property type="evidence" value="ECO:0000318"/>
    <property type="project" value="GO_Central"/>
</dbReference>
<dbReference type="GO" id="GO:0002098">
    <property type="term" value="P:tRNA wobble uridine modification"/>
    <property type="evidence" value="ECO:0000318"/>
    <property type="project" value="GO_Central"/>
</dbReference>
<dbReference type="CDD" id="cd01520">
    <property type="entry name" value="RHOD_YbbB"/>
    <property type="match status" value="1"/>
</dbReference>
<dbReference type="FunFam" id="3.40.250.10:FF:000009">
    <property type="entry name" value="tRNA 2-selenouridine/geranyl-2-thiouridine synthase"/>
    <property type="match status" value="1"/>
</dbReference>
<dbReference type="Gene3D" id="3.40.250.10">
    <property type="entry name" value="Rhodanese-like domain"/>
    <property type="match status" value="1"/>
</dbReference>
<dbReference type="HAMAP" id="MF_01622">
    <property type="entry name" value="tRNA_sel_U_synth"/>
    <property type="match status" value="1"/>
</dbReference>
<dbReference type="InterPro" id="IPR001763">
    <property type="entry name" value="Rhodanese-like_dom"/>
</dbReference>
<dbReference type="InterPro" id="IPR036873">
    <property type="entry name" value="Rhodanese-like_dom_sf"/>
</dbReference>
<dbReference type="InterPro" id="IPR017582">
    <property type="entry name" value="SelU"/>
</dbReference>
<dbReference type="NCBIfam" id="NF008749">
    <property type="entry name" value="PRK11784.1-1"/>
    <property type="match status" value="1"/>
</dbReference>
<dbReference type="NCBIfam" id="NF008751">
    <property type="entry name" value="PRK11784.1-3"/>
    <property type="match status" value="1"/>
</dbReference>
<dbReference type="NCBIfam" id="TIGR03167">
    <property type="entry name" value="tRNA_sel_U_synt"/>
    <property type="match status" value="1"/>
</dbReference>
<dbReference type="PANTHER" id="PTHR30401">
    <property type="entry name" value="TRNA 2-SELENOURIDINE SYNTHASE"/>
    <property type="match status" value="1"/>
</dbReference>
<dbReference type="PANTHER" id="PTHR30401:SF0">
    <property type="entry name" value="TRNA 2-SELENOURIDINE SYNTHASE"/>
    <property type="match status" value="1"/>
</dbReference>
<dbReference type="Pfam" id="PF00581">
    <property type="entry name" value="Rhodanese"/>
    <property type="match status" value="1"/>
</dbReference>
<dbReference type="SMART" id="SM00450">
    <property type="entry name" value="RHOD"/>
    <property type="match status" value="1"/>
</dbReference>
<dbReference type="SUPFAM" id="SSF52821">
    <property type="entry name" value="Rhodanese/Cell cycle control phosphatase"/>
    <property type="match status" value="1"/>
</dbReference>
<dbReference type="PROSITE" id="PS50206">
    <property type="entry name" value="RHODANESE_3"/>
    <property type="match status" value="1"/>
</dbReference>